<dbReference type="EC" id="1.1.1.94" evidence="1"/>
<dbReference type="EMBL" id="AE005672">
    <property type="protein sequence ID" value="AAK76150.1"/>
    <property type="molecule type" value="Genomic_DNA"/>
</dbReference>
<dbReference type="PIR" id="E95244">
    <property type="entry name" value="E95244"/>
</dbReference>
<dbReference type="RefSeq" id="WP_000415103.1">
    <property type="nucleotide sequence ID" value="NZ_CP155539.1"/>
</dbReference>
<dbReference type="SMR" id="Q97NF1"/>
<dbReference type="IntAct" id="Q97NF1">
    <property type="interactions" value="1"/>
</dbReference>
<dbReference type="PaxDb" id="170187-SP_2091"/>
<dbReference type="EnsemblBacteria" id="AAK76150">
    <property type="protein sequence ID" value="AAK76150"/>
    <property type="gene ID" value="SP_2091"/>
</dbReference>
<dbReference type="KEGG" id="spn:SP_2091"/>
<dbReference type="eggNOG" id="COG0240">
    <property type="taxonomic scope" value="Bacteria"/>
</dbReference>
<dbReference type="PhylomeDB" id="Q97NF1"/>
<dbReference type="BioCyc" id="SPNE170187:G1FZB-2176-MONOMER"/>
<dbReference type="UniPathway" id="UPA00940"/>
<dbReference type="Proteomes" id="UP000000585">
    <property type="component" value="Chromosome"/>
</dbReference>
<dbReference type="GO" id="GO:0005829">
    <property type="term" value="C:cytosol"/>
    <property type="evidence" value="ECO:0007669"/>
    <property type="project" value="TreeGrafter"/>
</dbReference>
<dbReference type="GO" id="GO:0047952">
    <property type="term" value="F:glycerol-3-phosphate dehydrogenase [NAD(P)+] activity"/>
    <property type="evidence" value="ECO:0007669"/>
    <property type="project" value="UniProtKB-UniRule"/>
</dbReference>
<dbReference type="GO" id="GO:0051287">
    <property type="term" value="F:NAD binding"/>
    <property type="evidence" value="ECO:0007669"/>
    <property type="project" value="InterPro"/>
</dbReference>
<dbReference type="GO" id="GO:0005975">
    <property type="term" value="P:carbohydrate metabolic process"/>
    <property type="evidence" value="ECO:0007669"/>
    <property type="project" value="InterPro"/>
</dbReference>
<dbReference type="GO" id="GO:0046167">
    <property type="term" value="P:glycerol-3-phosphate biosynthetic process"/>
    <property type="evidence" value="ECO:0007669"/>
    <property type="project" value="UniProtKB-UniRule"/>
</dbReference>
<dbReference type="GO" id="GO:0046168">
    <property type="term" value="P:glycerol-3-phosphate catabolic process"/>
    <property type="evidence" value="ECO:0007669"/>
    <property type="project" value="InterPro"/>
</dbReference>
<dbReference type="GO" id="GO:0006650">
    <property type="term" value="P:glycerophospholipid metabolic process"/>
    <property type="evidence" value="ECO:0007669"/>
    <property type="project" value="UniProtKB-UniRule"/>
</dbReference>
<dbReference type="GO" id="GO:0008654">
    <property type="term" value="P:phospholipid biosynthetic process"/>
    <property type="evidence" value="ECO:0007669"/>
    <property type="project" value="UniProtKB-KW"/>
</dbReference>
<dbReference type="FunFam" id="1.10.1040.10:FF:000001">
    <property type="entry name" value="Glycerol-3-phosphate dehydrogenase [NAD(P)+]"/>
    <property type="match status" value="1"/>
</dbReference>
<dbReference type="FunFam" id="3.40.50.720:FF:000019">
    <property type="entry name" value="Glycerol-3-phosphate dehydrogenase [NAD(P)+]"/>
    <property type="match status" value="1"/>
</dbReference>
<dbReference type="Gene3D" id="1.10.1040.10">
    <property type="entry name" value="N-(1-d-carboxylethyl)-l-norvaline Dehydrogenase, domain 2"/>
    <property type="match status" value="1"/>
</dbReference>
<dbReference type="Gene3D" id="3.40.50.720">
    <property type="entry name" value="NAD(P)-binding Rossmann-like Domain"/>
    <property type="match status" value="1"/>
</dbReference>
<dbReference type="HAMAP" id="MF_00394">
    <property type="entry name" value="NAD_Glyc3P_dehydrog"/>
    <property type="match status" value="1"/>
</dbReference>
<dbReference type="InterPro" id="IPR008927">
    <property type="entry name" value="6-PGluconate_DH-like_C_sf"/>
</dbReference>
<dbReference type="InterPro" id="IPR013328">
    <property type="entry name" value="6PGD_dom2"/>
</dbReference>
<dbReference type="InterPro" id="IPR006168">
    <property type="entry name" value="G3P_DH_NAD-dep"/>
</dbReference>
<dbReference type="InterPro" id="IPR006109">
    <property type="entry name" value="G3P_DH_NAD-dep_C"/>
</dbReference>
<dbReference type="InterPro" id="IPR011128">
    <property type="entry name" value="G3P_DH_NAD-dep_N"/>
</dbReference>
<dbReference type="InterPro" id="IPR036291">
    <property type="entry name" value="NAD(P)-bd_dom_sf"/>
</dbReference>
<dbReference type="NCBIfam" id="NF000940">
    <property type="entry name" value="PRK00094.1-2"/>
    <property type="match status" value="1"/>
</dbReference>
<dbReference type="NCBIfam" id="NF000941">
    <property type="entry name" value="PRK00094.1-3"/>
    <property type="match status" value="1"/>
</dbReference>
<dbReference type="NCBIfam" id="NF000942">
    <property type="entry name" value="PRK00094.1-4"/>
    <property type="match status" value="1"/>
</dbReference>
<dbReference type="PANTHER" id="PTHR11728">
    <property type="entry name" value="GLYCEROL-3-PHOSPHATE DEHYDROGENASE"/>
    <property type="match status" value="1"/>
</dbReference>
<dbReference type="PANTHER" id="PTHR11728:SF1">
    <property type="entry name" value="GLYCEROL-3-PHOSPHATE DEHYDROGENASE [NAD(+)] 2, CHLOROPLASTIC"/>
    <property type="match status" value="1"/>
</dbReference>
<dbReference type="Pfam" id="PF07479">
    <property type="entry name" value="NAD_Gly3P_dh_C"/>
    <property type="match status" value="1"/>
</dbReference>
<dbReference type="Pfam" id="PF01210">
    <property type="entry name" value="NAD_Gly3P_dh_N"/>
    <property type="match status" value="1"/>
</dbReference>
<dbReference type="PIRSF" id="PIRSF000114">
    <property type="entry name" value="Glycerol-3-P_dh"/>
    <property type="match status" value="1"/>
</dbReference>
<dbReference type="PRINTS" id="PR00077">
    <property type="entry name" value="GPDHDRGNASE"/>
</dbReference>
<dbReference type="SUPFAM" id="SSF48179">
    <property type="entry name" value="6-phosphogluconate dehydrogenase C-terminal domain-like"/>
    <property type="match status" value="1"/>
</dbReference>
<dbReference type="SUPFAM" id="SSF51735">
    <property type="entry name" value="NAD(P)-binding Rossmann-fold domains"/>
    <property type="match status" value="1"/>
</dbReference>
<dbReference type="PROSITE" id="PS00957">
    <property type="entry name" value="NAD_G3PDH"/>
    <property type="match status" value="1"/>
</dbReference>
<name>GPDA_STRPN</name>
<feature type="chain" id="PRO_0000138038" description="Glycerol-3-phosphate dehydrogenase [NAD(P)+]">
    <location>
        <begin position="1"/>
        <end position="338"/>
    </location>
</feature>
<feature type="active site" description="Proton acceptor" evidence="1">
    <location>
        <position position="194"/>
    </location>
</feature>
<feature type="binding site" evidence="1">
    <location>
        <position position="13"/>
    </location>
    <ligand>
        <name>NADPH</name>
        <dbReference type="ChEBI" id="CHEBI:57783"/>
    </ligand>
</feature>
<feature type="binding site" evidence="1">
    <location>
        <position position="14"/>
    </location>
    <ligand>
        <name>NADPH</name>
        <dbReference type="ChEBI" id="CHEBI:57783"/>
    </ligand>
</feature>
<feature type="binding site" evidence="1">
    <location>
        <position position="108"/>
    </location>
    <ligand>
        <name>NADPH</name>
        <dbReference type="ChEBI" id="CHEBI:57783"/>
    </ligand>
</feature>
<feature type="binding site" evidence="1">
    <location>
        <position position="108"/>
    </location>
    <ligand>
        <name>sn-glycerol 3-phosphate</name>
        <dbReference type="ChEBI" id="CHEBI:57597"/>
    </ligand>
</feature>
<feature type="binding site" evidence="1">
    <location>
        <position position="139"/>
    </location>
    <ligand>
        <name>sn-glycerol 3-phosphate</name>
        <dbReference type="ChEBI" id="CHEBI:57597"/>
    </ligand>
</feature>
<feature type="binding site" evidence="1">
    <location>
        <position position="141"/>
    </location>
    <ligand>
        <name>sn-glycerol 3-phosphate</name>
        <dbReference type="ChEBI" id="CHEBI:57597"/>
    </ligand>
</feature>
<feature type="binding site" evidence="1">
    <location>
        <position position="143"/>
    </location>
    <ligand>
        <name>NADPH</name>
        <dbReference type="ChEBI" id="CHEBI:57783"/>
    </ligand>
</feature>
<feature type="binding site" evidence="1">
    <location>
        <position position="194"/>
    </location>
    <ligand>
        <name>sn-glycerol 3-phosphate</name>
        <dbReference type="ChEBI" id="CHEBI:57597"/>
    </ligand>
</feature>
<feature type="binding site" evidence="1">
    <location>
        <position position="247"/>
    </location>
    <ligand>
        <name>sn-glycerol 3-phosphate</name>
        <dbReference type="ChEBI" id="CHEBI:57597"/>
    </ligand>
</feature>
<feature type="binding site" evidence="1">
    <location>
        <position position="257"/>
    </location>
    <ligand>
        <name>sn-glycerol 3-phosphate</name>
        <dbReference type="ChEBI" id="CHEBI:57597"/>
    </ligand>
</feature>
<feature type="binding site" evidence="1">
    <location>
        <position position="258"/>
    </location>
    <ligand>
        <name>NADPH</name>
        <dbReference type="ChEBI" id="CHEBI:57783"/>
    </ligand>
</feature>
<feature type="binding site" evidence="1">
    <location>
        <position position="258"/>
    </location>
    <ligand>
        <name>sn-glycerol 3-phosphate</name>
        <dbReference type="ChEBI" id="CHEBI:57597"/>
    </ligand>
</feature>
<feature type="binding site" evidence="1">
    <location>
        <position position="259"/>
    </location>
    <ligand>
        <name>sn-glycerol 3-phosphate</name>
        <dbReference type="ChEBI" id="CHEBI:57597"/>
    </ligand>
</feature>
<feature type="binding site" evidence="1">
    <location>
        <position position="282"/>
    </location>
    <ligand>
        <name>NADPH</name>
        <dbReference type="ChEBI" id="CHEBI:57783"/>
    </ligand>
</feature>
<feature type="binding site" evidence="1">
    <location>
        <position position="284"/>
    </location>
    <ligand>
        <name>NADPH</name>
        <dbReference type="ChEBI" id="CHEBI:57783"/>
    </ligand>
</feature>
<organism>
    <name type="scientific">Streptococcus pneumoniae serotype 4 (strain ATCC BAA-334 / TIGR4)</name>
    <dbReference type="NCBI Taxonomy" id="170187"/>
    <lineage>
        <taxon>Bacteria</taxon>
        <taxon>Bacillati</taxon>
        <taxon>Bacillota</taxon>
        <taxon>Bacilli</taxon>
        <taxon>Lactobacillales</taxon>
        <taxon>Streptococcaceae</taxon>
        <taxon>Streptococcus</taxon>
    </lineage>
</organism>
<gene>
    <name evidence="1" type="primary">gpsA</name>
    <name type="ordered locus">SP_2091</name>
</gene>
<accession>Q97NF1</accession>
<sequence>MEKQTVAVLGPGSWGTALSQVLNDNGHEVRIWGNLPEQINEINTHHTNKHYFKDVVLDENIIAYTDLAETLKDVDAILFVVPTKVTRLVAQQVAQTLDHKVIIMHASKGLEPDSHKRLSTILEEEIPEHLRSDIVVVSGPSHAEETIVRDLTLITAASKDLQTAQYVQKLFSNHYFRLYTNTDVIGVETAGALKNIIAVGAGALHGLGFGDNAKAAIIARGLAEITRLGVALGASPLTYSGLSGVGDLIVTGTSIHSRNWRAGDALGRGESLADIEANMGMVIEGISTTRAAYELAQELGVYMPITQAIYQVIYHGTNIKDAIYDIMNNEFKAENEWS</sequence>
<keyword id="KW-0963">Cytoplasm</keyword>
<keyword id="KW-0444">Lipid biosynthesis</keyword>
<keyword id="KW-0443">Lipid metabolism</keyword>
<keyword id="KW-0520">NAD</keyword>
<keyword id="KW-0521">NADP</keyword>
<keyword id="KW-0547">Nucleotide-binding</keyword>
<keyword id="KW-0560">Oxidoreductase</keyword>
<keyword id="KW-0594">Phospholipid biosynthesis</keyword>
<keyword id="KW-1208">Phospholipid metabolism</keyword>
<keyword id="KW-1185">Reference proteome</keyword>
<reference key="1">
    <citation type="journal article" date="2001" name="Science">
        <title>Complete genome sequence of a virulent isolate of Streptococcus pneumoniae.</title>
        <authorList>
            <person name="Tettelin H."/>
            <person name="Nelson K.E."/>
            <person name="Paulsen I.T."/>
            <person name="Eisen J.A."/>
            <person name="Read T.D."/>
            <person name="Peterson S.N."/>
            <person name="Heidelberg J.F."/>
            <person name="DeBoy R.T."/>
            <person name="Haft D.H."/>
            <person name="Dodson R.J."/>
            <person name="Durkin A.S."/>
            <person name="Gwinn M.L."/>
            <person name="Kolonay J.F."/>
            <person name="Nelson W.C."/>
            <person name="Peterson J.D."/>
            <person name="Umayam L.A."/>
            <person name="White O."/>
            <person name="Salzberg S.L."/>
            <person name="Lewis M.R."/>
            <person name="Radune D."/>
            <person name="Holtzapple E.K."/>
            <person name="Khouri H.M."/>
            <person name="Wolf A.M."/>
            <person name="Utterback T.R."/>
            <person name="Hansen C.L."/>
            <person name="McDonald L.A."/>
            <person name="Feldblyum T.V."/>
            <person name="Angiuoli S.V."/>
            <person name="Dickinson T."/>
            <person name="Hickey E.K."/>
            <person name="Holt I.E."/>
            <person name="Loftus B.J."/>
            <person name="Yang F."/>
            <person name="Smith H.O."/>
            <person name="Venter J.C."/>
            <person name="Dougherty B.A."/>
            <person name="Morrison D.A."/>
            <person name="Hollingshead S.K."/>
            <person name="Fraser C.M."/>
        </authorList>
    </citation>
    <scope>NUCLEOTIDE SEQUENCE [LARGE SCALE GENOMIC DNA]</scope>
    <source>
        <strain>ATCC BAA-334 / TIGR4</strain>
    </source>
</reference>
<proteinExistence type="evidence at protein level"/>
<protein>
    <recommendedName>
        <fullName evidence="1">Glycerol-3-phosphate dehydrogenase [NAD(P)+]</fullName>
        <ecNumber evidence="1">1.1.1.94</ecNumber>
    </recommendedName>
    <alternativeName>
        <fullName evidence="1">NAD(P)(+)-dependent glycerol-3-phosphate dehydrogenase</fullName>
    </alternativeName>
    <alternativeName>
        <fullName evidence="1">NAD(P)H-dependent dihydroxyacetone-phosphate reductase</fullName>
    </alternativeName>
</protein>
<evidence type="ECO:0000255" key="1">
    <source>
        <dbReference type="HAMAP-Rule" id="MF_00394"/>
    </source>
</evidence>
<comment type="function">
    <text evidence="1">Catalyzes the reduction of the glycolytic intermediate dihydroxyacetone phosphate (DHAP) to sn-glycerol 3-phosphate (G3P), the key precursor for phospholipid synthesis.</text>
</comment>
<comment type="catalytic activity">
    <reaction evidence="1">
        <text>sn-glycerol 3-phosphate + NAD(+) = dihydroxyacetone phosphate + NADH + H(+)</text>
        <dbReference type="Rhea" id="RHEA:11092"/>
        <dbReference type="ChEBI" id="CHEBI:15378"/>
        <dbReference type="ChEBI" id="CHEBI:57540"/>
        <dbReference type="ChEBI" id="CHEBI:57597"/>
        <dbReference type="ChEBI" id="CHEBI:57642"/>
        <dbReference type="ChEBI" id="CHEBI:57945"/>
        <dbReference type="EC" id="1.1.1.94"/>
    </reaction>
    <physiologicalReaction direction="right-to-left" evidence="1">
        <dbReference type="Rhea" id="RHEA:11094"/>
    </physiologicalReaction>
</comment>
<comment type="catalytic activity">
    <reaction evidence="1">
        <text>sn-glycerol 3-phosphate + NADP(+) = dihydroxyacetone phosphate + NADPH + H(+)</text>
        <dbReference type="Rhea" id="RHEA:11096"/>
        <dbReference type="ChEBI" id="CHEBI:15378"/>
        <dbReference type="ChEBI" id="CHEBI:57597"/>
        <dbReference type="ChEBI" id="CHEBI:57642"/>
        <dbReference type="ChEBI" id="CHEBI:57783"/>
        <dbReference type="ChEBI" id="CHEBI:58349"/>
        <dbReference type="EC" id="1.1.1.94"/>
    </reaction>
    <physiologicalReaction direction="right-to-left" evidence="1">
        <dbReference type="Rhea" id="RHEA:11098"/>
    </physiologicalReaction>
</comment>
<comment type="pathway">
    <text evidence="1">Membrane lipid metabolism; glycerophospholipid metabolism.</text>
</comment>
<comment type="interaction">
    <interactant intactId="EBI-6473470">
        <id>Q97NF1</id>
    </interactant>
    <interactant intactId="EBI-6473467">
        <id>Q97QD1</id>
        <label>SP_1288</label>
    </interactant>
    <organismsDiffer>false</organismsDiffer>
    <experiments>2</experiments>
</comment>
<comment type="subcellular location">
    <subcellularLocation>
        <location evidence="1">Cytoplasm</location>
    </subcellularLocation>
</comment>
<comment type="similarity">
    <text evidence="1">Belongs to the NAD-dependent glycerol-3-phosphate dehydrogenase family.</text>
</comment>